<reference key="1">
    <citation type="journal article" date="2000" name="DNA Res.">
        <title>Structural analysis of Arabidopsis thaliana chromosome 5. X. Sequence features of the regions of 3,076,755 bp covered by sixty P1 and TAC clones.</title>
        <authorList>
            <person name="Sato S."/>
            <person name="Nakamura Y."/>
            <person name="Kaneko T."/>
            <person name="Katoh T."/>
            <person name="Asamizu E."/>
            <person name="Kotani H."/>
            <person name="Tabata S."/>
        </authorList>
    </citation>
    <scope>NUCLEOTIDE SEQUENCE [LARGE SCALE GENOMIC DNA]</scope>
    <source>
        <strain>cv. Columbia</strain>
    </source>
</reference>
<reference key="2">
    <citation type="journal article" date="2017" name="Plant J.">
        <title>Araport11: a complete reannotation of the Arabidopsis thaliana reference genome.</title>
        <authorList>
            <person name="Cheng C.Y."/>
            <person name="Krishnakumar V."/>
            <person name="Chan A.P."/>
            <person name="Thibaud-Nissen F."/>
            <person name="Schobel S."/>
            <person name="Town C.D."/>
        </authorList>
    </citation>
    <scope>GENOME REANNOTATION</scope>
    <source>
        <strain>cv. Columbia</strain>
    </source>
</reference>
<reference key="3">
    <citation type="journal article" date="2004" name="Carbohydr. Res.">
        <title>Pectin methylesterases: sequence-structural features and phylogenetic relationships.</title>
        <authorList>
            <person name="Markovic O."/>
            <person name="Janecek S."/>
        </authorList>
    </citation>
    <scope>GENE FAMILY</scope>
    <scope>NOMENCLATURE</scope>
</reference>
<reference key="4">
    <citation type="journal article" date="2006" name="Planta">
        <title>Comprehensive expression profiling of the pectin methylesterase gene family during silique development in Arabidopsis thaliana.</title>
        <authorList>
            <person name="Louvet R."/>
            <person name="Cavel E."/>
            <person name="Gutierrez L."/>
            <person name="Guenin S."/>
            <person name="Roger D."/>
            <person name="Gillet F."/>
            <person name="Guerineau F."/>
            <person name="Pelloux J."/>
        </authorList>
    </citation>
    <scope>TISSUE SPECIFICITY</scope>
    <scope>DEVELOPMENTAL STAGE</scope>
</reference>
<protein>
    <recommendedName>
        <fullName>Probable pectinesterase/pectinesterase inhibitor 60</fullName>
    </recommendedName>
    <domain>
        <recommendedName>
            <fullName>Pectinesterase inhibitor 60</fullName>
        </recommendedName>
        <alternativeName>
            <fullName>Pectin methylesterase inhibitor 60</fullName>
        </alternativeName>
    </domain>
    <domain>
        <recommendedName>
            <fullName>Pectinesterase 60</fullName>
            <shortName>PE 60</shortName>
            <ecNumber>3.1.1.11</ecNumber>
        </recommendedName>
        <alternativeName>
            <fullName>Pectin methylesterase 60</fullName>
            <shortName>AtPME60</shortName>
        </alternativeName>
    </domain>
</protein>
<feature type="signal peptide" evidence="2">
    <location>
        <begin position="1"/>
        <end position="31"/>
    </location>
</feature>
<feature type="chain" id="PRO_0000370179" description="Probable pectinesterase/pectinesterase inhibitor 60">
    <location>
        <begin position="32"/>
        <end position="540"/>
    </location>
</feature>
<feature type="region of interest" description="Pectinesterase inhibitor 60">
    <location>
        <begin position="32"/>
        <end position="185"/>
    </location>
</feature>
<feature type="region of interest" description="Pectinesterase 60">
    <location>
        <begin position="225"/>
        <end position="526"/>
    </location>
</feature>
<feature type="active site" description="Proton donor; for pectinesterase activity" evidence="3">
    <location>
        <position position="355"/>
    </location>
</feature>
<feature type="active site" description="Nucleophile; for pectinesterase activity" evidence="3">
    <location>
        <position position="376"/>
    </location>
</feature>
<feature type="binding site" evidence="1">
    <location>
        <position position="302"/>
    </location>
    <ligand>
        <name>substrate</name>
        <note>for pectinesterase activity</note>
    </ligand>
</feature>
<feature type="binding site" evidence="1">
    <location>
        <position position="332"/>
    </location>
    <ligand>
        <name>substrate</name>
        <note>for pectinesterase activity</note>
    </ligand>
</feature>
<feature type="binding site" evidence="1">
    <location>
        <position position="444"/>
    </location>
    <ligand>
        <name>substrate</name>
        <note>for pectinesterase activity</note>
    </ligand>
</feature>
<feature type="binding site" evidence="1">
    <location>
        <position position="446"/>
    </location>
    <ligand>
        <name>substrate</name>
        <note>for pectinesterase activity</note>
    </ligand>
</feature>
<feature type="site" description="Transition state stabilizer" evidence="1">
    <location>
        <position position="354"/>
    </location>
</feature>
<feature type="glycosylation site" description="N-linked (GlcNAc...) asparagine" evidence="2">
    <location>
        <position position="34"/>
    </location>
</feature>
<feature type="glycosylation site" description="N-linked (GlcNAc...) asparagine" evidence="2">
    <location>
        <position position="91"/>
    </location>
</feature>
<feature type="glycosylation site" description="N-linked (GlcNAc...) asparagine" evidence="2">
    <location>
        <position position="95"/>
    </location>
</feature>
<feature type="glycosylation site" description="N-linked (GlcNAc...) asparagine" evidence="2">
    <location>
        <position position="120"/>
    </location>
</feature>
<feature type="glycosylation site" description="N-linked (GlcNAc...) asparagine" evidence="2">
    <location>
        <position position="161"/>
    </location>
</feature>
<feature type="glycosylation site" description="N-linked (GlcNAc...) asparagine" evidence="2">
    <location>
        <position position="195"/>
    </location>
</feature>
<feature type="disulfide bond" evidence="1">
    <location>
        <begin position="369"/>
        <end position="389"/>
    </location>
</feature>
<organism>
    <name type="scientific">Arabidopsis thaliana</name>
    <name type="common">Mouse-ear cress</name>
    <dbReference type="NCBI Taxonomy" id="3702"/>
    <lineage>
        <taxon>Eukaryota</taxon>
        <taxon>Viridiplantae</taxon>
        <taxon>Streptophyta</taxon>
        <taxon>Embryophyta</taxon>
        <taxon>Tracheophyta</taxon>
        <taxon>Spermatophyta</taxon>
        <taxon>Magnoliopsida</taxon>
        <taxon>eudicotyledons</taxon>
        <taxon>Gunneridae</taxon>
        <taxon>Pentapetalae</taxon>
        <taxon>rosids</taxon>
        <taxon>malvids</taxon>
        <taxon>Brassicales</taxon>
        <taxon>Brassicaceae</taxon>
        <taxon>Camelineae</taxon>
        <taxon>Arabidopsis</taxon>
    </lineage>
</organism>
<gene>
    <name type="primary">PME60</name>
    <name type="synonym">ARATH60</name>
    <name type="ordered locus">At5g51500</name>
    <name type="ORF">K17N15.5</name>
</gene>
<accession>Q9FHN4</accession>
<comment type="function">
    <text evidence="1">Acts in the modification of cell walls via demethylesterification of cell wall pectin.</text>
</comment>
<comment type="catalytic activity">
    <reaction>
        <text>[(1-&gt;4)-alpha-D-galacturonosyl methyl ester](n) + n H2O = [(1-&gt;4)-alpha-D-galacturonosyl](n) + n methanol + n H(+)</text>
        <dbReference type="Rhea" id="RHEA:22380"/>
        <dbReference type="Rhea" id="RHEA-COMP:14570"/>
        <dbReference type="Rhea" id="RHEA-COMP:14573"/>
        <dbReference type="ChEBI" id="CHEBI:15377"/>
        <dbReference type="ChEBI" id="CHEBI:15378"/>
        <dbReference type="ChEBI" id="CHEBI:17790"/>
        <dbReference type="ChEBI" id="CHEBI:140522"/>
        <dbReference type="ChEBI" id="CHEBI:140523"/>
        <dbReference type="EC" id="3.1.1.11"/>
    </reaction>
</comment>
<comment type="pathway">
    <text>Glycan metabolism; pectin degradation; 2-dehydro-3-deoxy-D-gluconate from pectin: step 1/5.</text>
</comment>
<comment type="subcellular location">
    <subcellularLocation>
        <location evidence="1">Secreted</location>
        <location evidence="1">Cell wall</location>
    </subcellularLocation>
</comment>
<comment type="tissue specificity">
    <text evidence="4">Expressed in siliques.</text>
</comment>
<comment type="developmental stage">
    <text evidence="4">Expressed during late developmental phases of siliques.</text>
</comment>
<comment type="miscellaneous">
    <text>The PMEI region may act as an autoinhibitory domain and prevent untimely PME activity during transport.</text>
</comment>
<comment type="similarity">
    <text evidence="5">In the N-terminal section; belongs to the PMEI family.</text>
</comment>
<comment type="similarity">
    <text evidence="5">In the C-terminal section; belongs to the pectinesterase family.</text>
</comment>
<dbReference type="EC" id="3.1.1.11"/>
<dbReference type="EMBL" id="AB018109">
    <property type="protein sequence ID" value="BAB08666.1"/>
    <property type="molecule type" value="Genomic_DNA"/>
</dbReference>
<dbReference type="EMBL" id="CP002688">
    <property type="protein sequence ID" value="AED96091.1"/>
    <property type="molecule type" value="Genomic_DNA"/>
</dbReference>
<dbReference type="RefSeq" id="NP_199963.1">
    <property type="nucleotide sequence ID" value="NM_124529.2"/>
</dbReference>
<dbReference type="SMR" id="Q9FHN4"/>
<dbReference type="FunCoup" id="Q9FHN4">
    <property type="interactions" value="131"/>
</dbReference>
<dbReference type="STRING" id="3702.Q9FHN4"/>
<dbReference type="GlyCosmos" id="Q9FHN4">
    <property type="glycosylation" value="6 sites, No reported glycans"/>
</dbReference>
<dbReference type="GlyGen" id="Q9FHN4">
    <property type="glycosylation" value="6 sites"/>
</dbReference>
<dbReference type="iPTMnet" id="Q9FHN4"/>
<dbReference type="PaxDb" id="3702-AT5G51500.1"/>
<dbReference type="ProteomicsDB" id="226271"/>
<dbReference type="EnsemblPlants" id="AT5G51500.1">
    <property type="protein sequence ID" value="AT5G51500.1"/>
    <property type="gene ID" value="AT5G51500"/>
</dbReference>
<dbReference type="GeneID" id="835224"/>
<dbReference type="Gramene" id="AT5G51500.1">
    <property type="protein sequence ID" value="AT5G51500.1"/>
    <property type="gene ID" value="AT5G51500"/>
</dbReference>
<dbReference type="KEGG" id="ath:AT5G51500"/>
<dbReference type="Araport" id="AT5G51500"/>
<dbReference type="TAIR" id="AT5G51500"/>
<dbReference type="eggNOG" id="ENOG502QU67">
    <property type="taxonomic scope" value="Eukaryota"/>
</dbReference>
<dbReference type="HOGENOM" id="CLU_012243_9_1_1"/>
<dbReference type="InParanoid" id="Q9FHN4"/>
<dbReference type="OMA" id="LCFHPLT"/>
<dbReference type="PhylomeDB" id="Q9FHN4"/>
<dbReference type="BioCyc" id="ARA:AT5G51500-MONOMER"/>
<dbReference type="UniPathway" id="UPA00545">
    <property type="reaction ID" value="UER00823"/>
</dbReference>
<dbReference type="PRO" id="PR:Q9FHN4"/>
<dbReference type="Proteomes" id="UP000006548">
    <property type="component" value="Chromosome 5"/>
</dbReference>
<dbReference type="ExpressionAtlas" id="Q9FHN4">
    <property type="expression patterns" value="baseline and differential"/>
</dbReference>
<dbReference type="GO" id="GO:0005576">
    <property type="term" value="C:extracellular region"/>
    <property type="evidence" value="ECO:0007669"/>
    <property type="project" value="UniProtKB-KW"/>
</dbReference>
<dbReference type="GO" id="GO:0004857">
    <property type="term" value="F:enzyme inhibitor activity"/>
    <property type="evidence" value="ECO:0007669"/>
    <property type="project" value="InterPro"/>
</dbReference>
<dbReference type="GO" id="GO:0030599">
    <property type="term" value="F:pectinesterase activity"/>
    <property type="evidence" value="ECO:0007669"/>
    <property type="project" value="UniProtKB-EC"/>
</dbReference>
<dbReference type="GO" id="GO:0042545">
    <property type="term" value="P:cell wall modification"/>
    <property type="evidence" value="ECO:0007669"/>
    <property type="project" value="InterPro"/>
</dbReference>
<dbReference type="GO" id="GO:0045490">
    <property type="term" value="P:pectin catabolic process"/>
    <property type="evidence" value="ECO:0007669"/>
    <property type="project" value="UniProtKB-UniPathway"/>
</dbReference>
<dbReference type="CDD" id="cd15798">
    <property type="entry name" value="PMEI-like_3"/>
    <property type="match status" value="1"/>
</dbReference>
<dbReference type="FunFam" id="2.160.20.10:FF:000001">
    <property type="entry name" value="Pectinesterase"/>
    <property type="match status" value="1"/>
</dbReference>
<dbReference type="Gene3D" id="1.20.140.40">
    <property type="entry name" value="Invertase/pectin methylesterase inhibitor family protein"/>
    <property type="match status" value="1"/>
</dbReference>
<dbReference type="Gene3D" id="2.160.20.10">
    <property type="entry name" value="Single-stranded right-handed beta-helix, Pectin lyase-like"/>
    <property type="match status" value="1"/>
</dbReference>
<dbReference type="InterPro" id="IPR035513">
    <property type="entry name" value="Invertase/methylesterase_inhib"/>
</dbReference>
<dbReference type="InterPro" id="IPR012334">
    <property type="entry name" value="Pectin_lyas_fold"/>
</dbReference>
<dbReference type="InterPro" id="IPR011050">
    <property type="entry name" value="Pectin_lyase_fold/virulence"/>
</dbReference>
<dbReference type="InterPro" id="IPR033131">
    <property type="entry name" value="Pectinesterase_Asp_AS"/>
</dbReference>
<dbReference type="InterPro" id="IPR000070">
    <property type="entry name" value="Pectinesterase_cat"/>
</dbReference>
<dbReference type="InterPro" id="IPR006501">
    <property type="entry name" value="Pectinesterase_inhib_dom"/>
</dbReference>
<dbReference type="InterPro" id="IPR018040">
    <property type="entry name" value="Pectinesterase_Tyr_AS"/>
</dbReference>
<dbReference type="NCBIfam" id="TIGR01614">
    <property type="entry name" value="PME_inhib"/>
    <property type="match status" value="1"/>
</dbReference>
<dbReference type="PANTHER" id="PTHR31707">
    <property type="entry name" value="PECTINESTERASE"/>
    <property type="match status" value="1"/>
</dbReference>
<dbReference type="Pfam" id="PF01095">
    <property type="entry name" value="Pectinesterase"/>
    <property type="match status" value="1"/>
</dbReference>
<dbReference type="Pfam" id="PF04043">
    <property type="entry name" value="PMEI"/>
    <property type="match status" value="1"/>
</dbReference>
<dbReference type="SMART" id="SM00856">
    <property type="entry name" value="PMEI"/>
    <property type="match status" value="1"/>
</dbReference>
<dbReference type="SUPFAM" id="SSF51126">
    <property type="entry name" value="Pectin lyase-like"/>
    <property type="match status" value="1"/>
</dbReference>
<dbReference type="SUPFAM" id="SSF101148">
    <property type="entry name" value="Plant invertase/pectin methylesterase inhibitor"/>
    <property type="match status" value="1"/>
</dbReference>
<dbReference type="PROSITE" id="PS00800">
    <property type="entry name" value="PECTINESTERASE_1"/>
    <property type="match status" value="1"/>
</dbReference>
<dbReference type="PROSITE" id="PS00503">
    <property type="entry name" value="PECTINESTERASE_2"/>
    <property type="match status" value="1"/>
</dbReference>
<name>PME60_ARATH</name>
<evidence type="ECO:0000250" key="1"/>
<evidence type="ECO:0000255" key="2"/>
<evidence type="ECO:0000255" key="3">
    <source>
        <dbReference type="PROSITE-ProRule" id="PRU10040"/>
    </source>
</evidence>
<evidence type="ECO:0000269" key="4">
    <source>
    </source>
</evidence>
<evidence type="ECO:0000305" key="5"/>
<proteinExistence type="evidence at transcript level"/>
<sequence length="540" mass="59648">MNIMMVQNISFLSLHLLLILLLCLRPLTTVADGNSTNIDGWCDKTPYPYPCKRYFIKHSGFRLPTQISEFRVLLVEAAMDRAVSAWDKLTNSSKNCTDFKKQAVLADCINLYGDTVMQLNRTLQGVSSKTGRRCTDFDAQTWLSTALTNTETCRRGSSDLNVSDFTTPIVSNTKISHLISNCLAVNGALLTAGKNDSTTGDSKGFPTWVSRKERRLLQLQSVRANLVVAKDGSGHFKTVQAAIDVAGRRKVTSGRFVIYVKRGIYQENLNVRLNNDNIMLVGDGMRYTIITGGRSVKGGYTTYSSATAGIEGLHFIAKGIAFQNTAGPAKGQAVALRSSSDLSIFYRCSIEGYQDTLMVHSQRQFYRECYIYGTVDFIFGNAAVVFQNCIILPRLPLKGQANVITAQGRTDLFQNTGISIHNSIIIPAPDLKPVVRSVKTYMGRPWMMYSRTVVLKTYIDSVVSPVGWSPWTKGSTYGLDTLFYAEYKNIGPASSTRWRVRWKGFHVLSKASDASAFSVGKFIAGTAWLPGSGIPFTSEL</sequence>
<keyword id="KW-0063">Aspartyl esterase</keyword>
<keyword id="KW-0134">Cell wall</keyword>
<keyword id="KW-0961">Cell wall biogenesis/degradation</keyword>
<keyword id="KW-1015">Disulfide bond</keyword>
<keyword id="KW-0325">Glycoprotein</keyword>
<keyword id="KW-0378">Hydrolase</keyword>
<keyword id="KW-1185">Reference proteome</keyword>
<keyword id="KW-0964">Secreted</keyword>
<keyword id="KW-0732">Signal</keyword>